<proteinExistence type="inferred from homology"/>
<evidence type="ECO:0000255" key="1"/>
<evidence type="ECO:0000256" key="2">
    <source>
        <dbReference type="SAM" id="MobiDB-lite"/>
    </source>
</evidence>
<evidence type="ECO:0000305" key="3"/>
<gene>
    <name type="ordered locus">lpl2888</name>
</gene>
<sequence>MKFKKIILALACLSSPLYADQDQQLKSEIQRLQHQAEDLQAQLNRLQKQLANHKSSQQKHEQQAATKPAEPQSKPTVKSGAAIEEKYHSSKVEVHAPDAHPESISFYPTALIADNRVVTYIAGTPVVSSPFLGDRPAFDGSDYIVNISSINRDVRLLQQRRRLYRAYQKIGYPIPNMPIISLSGKTEPAATFNNPFRSTNTDGDITLGSSELDVAAALNENVEAYIAIAYDESPPAIGPRVNNSAFNLNMGFVNIGNLDKSPLYFTAGQVYVPFGRYSSAMVSSPVTMNLARTKTRPVIFGYKSQGDTGPFGAVYGYRSDTTLGRSGVGGVNLGYIFGFDNDINGEIGGGFISSVADAGGMQSTGSNVGTTFGGFGSITNGNENVRKTKAADVHGHVGYDRYNLTLEWVGAIQSFRPQDLSFNGQGARPQAAQAELGMTFMAFNRPASIGVGYQWTKEALALNLPKRRYVGVFNISIWKDTVESIEYRHDIDYGITQFANGAAPQGFVNLPTLGTGKSADTVSAQIGVYF</sequence>
<reference key="1">
    <citation type="journal article" date="2004" name="Nat. Genet.">
        <title>Evidence in the Legionella pneumophila genome for exploitation of host cell functions and high genome plasticity.</title>
        <authorList>
            <person name="Cazalet C."/>
            <person name="Rusniok C."/>
            <person name="Brueggemann H."/>
            <person name="Zidane N."/>
            <person name="Magnier A."/>
            <person name="Ma L."/>
            <person name="Tichit M."/>
            <person name="Jarraud S."/>
            <person name="Bouchier C."/>
            <person name="Vandenesch F."/>
            <person name="Kunst F."/>
            <person name="Etienne J."/>
            <person name="Glaser P."/>
            <person name="Buchrieser C."/>
        </authorList>
    </citation>
    <scope>NUCLEOTIDE SEQUENCE [LARGE SCALE GENOMIC DNA]</scope>
    <source>
        <strain>Lens</strain>
    </source>
</reference>
<comment type="similarity">
    <text evidence="3">Belongs to the UPF0422 family.</text>
</comment>
<name>Y2888_LEGPL</name>
<accession>Q5WSJ0</accession>
<keyword id="KW-0175">Coiled coil</keyword>
<keyword id="KW-0732">Signal</keyword>
<protein>
    <recommendedName>
        <fullName>UPF0422 protein lpl2888</fullName>
    </recommendedName>
</protein>
<feature type="signal peptide" evidence="1">
    <location>
        <begin position="1"/>
        <end position="19"/>
    </location>
</feature>
<feature type="chain" id="PRO_0000283755" description="UPF0422 protein lpl2888">
    <location>
        <begin position="20"/>
        <end position="530"/>
    </location>
</feature>
<feature type="region of interest" description="Disordered" evidence="2">
    <location>
        <begin position="50"/>
        <end position="81"/>
    </location>
</feature>
<feature type="coiled-coil region" evidence="1">
    <location>
        <begin position="20"/>
        <end position="66"/>
    </location>
</feature>
<organism>
    <name type="scientific">Legionella pneumophila (strain Lens)</name>
    <dbReference type="NCBI Taxonomy" id="297245"/>
    <lineage>
        <taxon>Bacteria</taxon>
        <taxon>Pseudomonadati</taxon>
        <taxon>Pseudomonadota</taxon>
        <taxon>Gammaproteobacteria</taxon>
        <taxon>Legionellales</taxon>
        <taxon>Legionellaceae</taxon>
        <taxon>Legionella</taxon>
    </lineage>
</organism>
<dbReference type="EMBL" id="CR628337">
    <property type="protein sequence ID" value="CAH17132.1"/>
    <property type="molecule type" value="Genomic_DNA"/>
</dbReference>
<dbReference type="RefSeq" id="WP_011216800.1">
    <property type="nucleotide sequence ID" value="NC_006369.1"/>
</dbReference>
<dbReference type="KEGG" id="lpf:lpl2888"/>
<dbReference type="LegioList" id="lpl2888"/>
<dbReference type="HOGENOM" id="CLU_035501_0_0_6"/>
<dbReference type="Proteomes" id="UP000002517">
    <property type="component" value="Chromosome"/>
</dbReference>
<dbReference type="NCBIfam" id="NF033652">
    <property type="entry name" value="LbtU_sider_porin"/>
    <property type="match status" value="1"/>
</dbReference>